<accession>Q76IQ7</accession>
<name>TOX2_RAT</name>
<keyword id="KW-0238">DNA-binding</keyword>
<keyword id="KW-0539">Nucleus</keyword>
<keyword id="KW-1185">Reference proteome</keyword>
<keyword id="KW-0804">Transcription</keyword>
<keyword id="KW-0805">Transcription regulation</keyword>
<protein>
    <recommendedName>
        <fullName>TOX high mobility group box family member 2</fullName>
    </recommendedName>
    <alternativeName>
        <fullName>Granulosa cell HMG box protein 1</fullName>
        <shortName>GCX-1</shortName>
    </alternativeName>
</protein>
<proteinExistence type="evidence at transcript level"/>
<feature type="chain" id="PRO_0000048572" description="TOX high mobility group box family member 2">
    <location>
        <begin position="1"/>
        <end position="473"/>
    </location>
</feature>
<feature type="DNA-binding region" description="HMG box" evidence="1">
    <location>
        <begin position="204"/>
        <end position="272"/>
    </location>
</feature>
<feature type="region of interest" description="Disordered" evidence="2">
    <location>
        <begin position="1"/>
        <end position="42"/>
    </location>
</feature>
<feature type="region of interest" description="Required for transcriptional activation">
    <location>
        <begin position="25"/>
        <end position="63"/>
    </location>
</feature>
<feature type="region of interest" description="Disordered" evidence="2">
    <location>
        <begin position="139"/>
        <end position="211"/>
    </location>
</feature>
<feature type="region of interest" description="Disordered" evidence="2">
    <location>
        <begin position="277"/>
        <end position="302"/>
    </location>
</feature>
<feature type="region of interest" description="Disordered" evidence="2">
    <location>
        <begin position="340"/>
        <end position="473"/>
    </location>
</feature>
<feature type="short sequence motif" description="Nuclear localization signal" evidence="3">
    <location>
        <begin position="172"/>
        <end position="201"/>
    </location>
</feature>
<feature type="compositionally biased region" description="Polar residues" evidence="2">
    <location>
        <begin position="8"/>
        <end position="20"/>
    </location>
</feature>
<feature type="compositionally biased region" description="Low complexity" evidence="2">
    <location>
        <begin position="153"/>
        <end position="164"/>
    </location>
</feature>
<feature type="compositionally biased region" description="Basic and acidic residues" evidence="2">
    <location>
        <begin position="171"/>
        <end position="188"/>
    </location>
</feature>
<feature type="compositionally biased region" description="Basic residues" evidence="2">
    <location>
        <begin position="189"/>
        <end position="199"/>
    </location>
</feature>
<feature type="compositionally biased region" description="Low complexity" evidence="2">
    <location>
        <begin position="373"/>
        <end position="382"/>
    </location>
</feature>
<feature type="compositionally biased region" description="Low complexity" evidence="2">
    <location>
        <begin position="415"/>
        <end position="440"/>
    </location>
</feature>
<feature type="compositionally biased region" description="Polar residues" evidence="2">
    <location>
        <begin position="463"/>
        <end position="473"/>
    </location>
</feature>
<reference key="1">
    <citation type="journal article" date="2004" name="Endocrinology">
        <title>Cloning and characterization of granulosa cell high-mobility group (HMG)-box protein-1, a novel HMG-box transcriptional regulator strongly expressed in rat ovarian granulosa cells.</title>
        <authorList>
            <person name="Kajitani T."/>
            <person name="Mizutani T."/>
            <person name="Yamada K."/>
            <person name="Yazawa T."/>
            <person name="Sekiguchi T."/>
            <person name="Yoshino M."/>
            <person name="Kawata H."/>
            <person name="Miyamoto K."/>
        </authorList>
    </citation>
    <scope>NUCLEOTIDE SEQUENCE [MRNA]</scope>
    <scope>TISSUE SPECIFICITY</scope>
    <scope>INDUCTION</scope>
    <scope>SUBCELLULAR LOCATION</scope>
    <scope>NUCLEAR LOCALIZATION SIGNAL</scope>
    <scope>FUNCTION</scope>
    <source>
        <tissue>Ovarian granulosa cell</tissue>
    </source>
</reference>
<organism>
    <name type="scientific">Rattus norvegicus</name>
    <name type="common">Rat</name>
    <dbReference type="NCBI Taxonomy" id="10116"/>
    <lineage>
        <taxon>Eukaryota</taxon>
        <taxon>Metazoa</taxon>
        <taxon>Chordata</taxon>
        <taxon>Craniata</taxon>
        <taxon>Vertebrata</taxon>
        <taxon>Euteleostomi</taxon>
        <taxon>Mammalia</taxon>
        <taxon>Eutheria</taxon>
        <taxon>Euarchontoglires</taxon>
        <taxon>Glires</taxon>
        <taxon>Rodentia</taxon>
        <taxon>Myomorpha</taxon>
        <taxon>Muroidea</taxon>
        <taxon>Muridae</taxon>
        <taxon>Murinae</taxon>
        <taxon>Rattus</taxon>
    </lineage>
</organism>
<gene>
    <name type="primary">Tox2</name>
    <name type="synonym">Gcx-1</name>
    <name type="synonym">Gcx1</name>
</gene>
<sequence>MSDGNPELLSTSQTYNSQGESNEDYEIPPITPPNLPEPSLLHLGDHEAGYHSLCHGLAPNGLLPAYSYQAMDLPAIMVSNMLAQDGHLLSGQLPTIQEMVHSEVAAYDSGRPGPLLGRPAMLASHMSALSQSQLISQMGLRSGIAHSSPSPPGSKSATPSPSSSTQEEESDAHFKISGEKRPSTDPGKKAKNPKKKKKKDPNEPQKPVSAYALFFRDTQAAIKGQNPSATFGDVSKIVASMWDSLGEEQKQAYKRKTEAAKKEYLKALAAYRASLVSKSPPDQGEAKNAQANPPAKMLPPKQPMYAMPGLASFLTPSDLQAFRSAASPASLARTLGSKALLPGLSTSPPPPSFPLSPSLHQQLPLPPHAQGTLLSPPLSMSPAPQPPVLPAPMALQVQLAMSPSPPGPQDFPHISDFPSGSGSRSPGPSNPSSSGDWDGSYPSGERGLGTCRLCRSSPPPTTSPKNLQEPSAR</sequence>
<dbReference type="EMBL" id="AB096685">
    <property type="protein sequence ID" value="BAD02336.1"/>
    <property type="molecule type" value="mRNA"/>
</dbReference>
<dbReference type="RefSeq" id="NP_955424.2">
    <property type="nucleotide sequence ID" value="NM_199392.2"/>
</dbReference>
<dbReference type="RefSeq" id="XP_017447283.1">
    <property type="nucleotide sequence ID" value="XM_017591794.3"/>
</dbReference>
<dbReference type="RefSeq" id="XP_038961046.1">
    <property type="nucleotide sequence ID" value="XM_039105118.2"/>
</dbReference>
<dbReference type="RefSeq" id="XP_038961047.1">
    <property type="nucleotide sequence ID" value="XM_039105119.2"/>
</dbReference>
<dbReference type="RefSeq" id="XP_038961048.1">
    <property type="nucleotide sequence ID" value="XM_039105120.2"/>
</dbReference>
<dbReference type="SMR" id="Q76IQ7"/>
<dbReference type="FunCoup" id="Q76IQ7">
    <property type="interactions" value="774"/>
</dbReference>
<dbReference type="STRING" id="10116.ENSRNOP00000061248"/>
<dbReference type="GlyGen" id="Q76IQ7">
    <property type="glycosylation" value="2 sites"/>
</dbReference>
<dbReference type="PhosphoSitePlus" id="Q76IQ7"/>
<dbReference type="PaxDb" id="10116-ENSRNOP00000061248"/>
<dbReference type="GeneID" id="311615"/>
<dbReference type="KEGG" id="rno:311615"/>
<dbReference type="UCSC" id="RGD:735184">
    <property type="organism name" value="rat"/>
</dbReference>
<dbReference type="AGR" id="RGD:735184"/>
<dbReference type="CTD" id="84969"/>
<dbReference type="RGD" id="735184">
    <property type="gene designation" value="Tox2"/>
</dbReference>
<dbReference type="eggNOG" id="KOG0381">
    <property type="taxonomic scope" value="Eukaryota"/>
</dbReference>
<dbReference type="InParanoid" id="Q76IQ7"/>
<dbReference type="PhylomeDB" id="Q76IQ7"/>
<dbReference type="PRO" id="PR:Q76IQ7"/>
<dbReference type="Proteomes" id="UP000002494">
    <property type="component" value="Unplaced"/>
</dbReference>
<dbReference type="GO" id="GO:0005634">
    <property type="term" value="C:nucleus"/>
    <property type="evidence" value="ECO:0000318"/>
    <property type="project" value="GO_Central"/>
</dbReference>
<dbReference type="GO" id="GO:0031490">
    <property type="term" value="F:chromatin DNA binding"/>
    <property type="evidence" value="ECO:0000318"/>
    <property type="project" value="GO_Central"/>
</dbReference>
<dbReference type="GO" id="GO:0061629">
    <property type="term" value="F:RNA polymerase II-specific DNA-binding transcription factor binding"/>
    <property type="evidence" value="ECO:0000353"/>
    <property type="project" value="RGD"/>
</dbReference>
<dbReference type="GO" id="GO:0003713">
    <property type="term" value="F:transcription coactivator activity"/>
    <property type="evidence" value="ECO:0000266"/>
    <property type="project" value="RGD"/>
</dbReference>
<dbReference type="GO" id="GO:0008585">
    <property type="term" value="P:female gonad development"/>
    <property type="evidence" value="ECO:0000270"/>
    <property type="project" value="RGD"/>
</dbReference>
<dbReference type="GO" id="GO:0045944">
    <property type="term" value="P:positive regulation of transcription by RNA polymerase II"/>
    <property type="evidence" value="ECO:0000314"/>
    <property type="project" value="RGD"/>
</dbReference>
<dbReference type="GO" id="GO:0006357">
    <property type="term" value="P:regulation of transcription by RNA polymerase II"/>
    <property type="evidence" value="ECO:0000318"/>
    <property type="project" value="GO_Central"/>
</dbReference>
<dbReference type="GO" id="GO:0034698">
    <property type="term" value="P:response to gonadotropin"/>
    <property type="evidence" value="ECO:0000270"/>
    <property type="project" value="RGD"/>
</dbReference>
<dbReference type="CDD" id="cd21995">
    <property type="entry name" value="HMG-box_TOX-like"/>
    <property type="match status" value="1"/>
</dbReference>
<dbReference type="FunFam" id="1.10.30.10:FF:000005">
    <property type="entry name" value="TOX high mobility group box family member 3"/>
    <property type="match status" value="1"/>
</dbReference>
<dbReference type="Gene3D" id="1.10.30.10">
    <property type="entry name" value="High mobility group box domain"/>
    <property type="match status" value="1"/>
</dbReference>
<dbReference type="InterPro" id="IPR009071">
    <property type="entry name" value="HMG_box_dom"/>
</dbReference>
<dbReference type="InterPro" id="IPR036910">
    <property type="entry name" value="HMG_box_dom_sf"/>
</dbReference>
<dbReference type="InterPro" id="IPR051365">
    <property type="entry name" value="TOX_HMG-box_domain"/>
</dbReference>
<dbReference type="PANTHER" id="PTHR45781">
    <property type="entry name" value="AGAP000281-PA"/>
    <property type="match status" value="1"/>
</dbReference>
<dbReference type="PANTHER" id="PTHR45781:SF5">
    <property type="entry name" value="TOX HIGH MOBILITY GROUP BOX FAMILY MEMBER 2"/>
    <property type="match status" value="1"/>
</dbReference>
<dbReference type="Pfam" id="PF00505">
    <property type="entry name" value="HMG_box"/>
    <property type="match status" value="1"/>
</dbReference>
<dbReference type="PRINTS" id="PR00886">
    <property type="entry name" value="HIGHMOBLTY12"/>
</dbReference>
<dbReference type="SMART" id="SM00398">
    <property type="entry name" value="HMG"/>
    <property type="match status" value="1"/>
</dbReference>
<dbReference type="SUPFAM" id="SSF47095">
    <property type="entry name" value="HMG-box"/>
    <property type="match status" value="1"/>
</dbReference>
<dbReference type="PROSITE" id="PS50118">
    <property type="entry name" value="HMG_BOX_2"/>
    <property type="match status" value="1"/>
</dbReference>
<evidence type="ECO:0000255" key="1">
    <source>
        <dbReference type="PROSITE-ProRule" id="PRU00267"/>
    </source>
</evidence>
<evidence type="ECO:0000256" key="2">
    <source>
        <dbReference type="SAM" id="MobiDB-lite"/>
    </source>
</evidence>
<evidence type="ECO:0000269" key="3">
    <source>
    </source>
</evidence>
<comment type="function">
    <text evidence="3">Putative transcriptional activator involved in the hypothalamo-pituitary-gonadal system.</text>
</comment>
<comment type="subcellular location">
    <subcellularLocation>
        <location evidence="1 3">Nucleus</location>
    </subcellularLocation>
</comment>
<comment type="tissue specificity">
    <text evidence="3">Highly expressed in ovary, where it is restricted to undifferentiated granulosa cells. Expressed in hypothalamus, pituitary gland, testis and uterus.</text>
</comment>